<protein>
    <recommendedName>
        <fullName>Salt stress root protein RS1</fullName>
    </recommendedName>
</protein>
<name>SRS1_ORYSJ</name>
<dbReference type="EMBL" id="AP002481">
    <property type="protein sequence ID" value="BAA96588.1"/>
    <property type="molecule type" value="Genomic_DNA"/>
</dbReference>
<dbReference type="EMBL" id="AP008207">
    <property type="protein sequence ID" value="BAF04422.1"/>
    <property type="molecule type" value="Genomic_DNA"/>
</dbReference>
<dbReference type="EMBL" id="AP014957">
    <property type="protein sequence ID" value="BAS71194.1"/>
    <property type="molecule type" value="Genomic_DNA"/>
</dbReference>
<dbReference type="EMBL" id="CM000138">
    <property type="protein sequence ID" value="EAZ11155.1"/>
    <property type="molecule type" value="Genomic_DNA"/>
</dbReference>
<dbReference type="EMBL" id="AK065256">
    <property type="protein sequence ID" value="BAG89437.1"/>
    <property type="molecule type" value="mRNA"/>
</dbReference>
<dbReference type="RefSeq" id="XP_015621495.1">
    <property type="nucleotide sequence ID" value="XM_015766009.1"/>
</dbReference>
<dbReference type="FunCoup" id="Q0JPA6">
    <property type="interactions" value="323"/>
</dbReference>
<dbReference type="STRING" id="39947.Q0JPA6"/>
<dbReference type="PaxDb" id="39947-Q0JPA6"/>
<dbReference type="EnsemblPlants" id="Os01t0233000-01">
    <property type="protein sequence ID" value="Os01t0233000-01"/>
    <property type="gene ID" value="Os01g0233000"/>
</dbReference>
<dbReference type="Gramene" id="Os01t0233000-01">
    <property type="protein sequence ID" value="Os01t0233000-01"/>
    <property type="gene ID" value="Os01g0233000"/>
</dbReference>
<dbReference type="KEGG" id="dosa:Os01g0233000"/>
<dbReference type="eggNOG" id="ENOG502RZAR">
    <property type="taxonomic scope" value="Eukaryota"/>
</dbReference>
<dbReference type="HOGENOM" id="CLU_088395_0_0_1"/>
<dbReference type="InParanoid" id="Q0JPA6"/>
<dbReference type="OMA" id="KEEPAAX"/>
<dbReference type="OrthoDB" id="1933409at2759"/>
<dbReference type="Proteomes" id="UP000000763">
    <property type="component" value="Chromosome 1"/>
</dbReference>
<dbReference type="Proteomes" id="UP000007752">
    <property type="component" value="Chromosome 1"/>
</dbReference>
<dbReference type="Proteomes" id="UP000059680">
    <property type="component" value="Chromosome 1"/>
</dbReference>
<dbReference type="GO" id="GO:0005886">
    <property type="term" value="C:plasma membrane"/>
    <property type="evidence" value="ECO:0007669"/>
    <property type="project" value="InterPro"/>
</dbReference>
<dbReference type="InterPro" id="IPR008469">
    <property type="entry name" value="DREPP"/>
</dbReference>
<dbReference type="PANTHER" id="PTHR38522">
    <property type="entry name" value="PLASMA MEMBRANE-ASSOCIATED CATION-BINDING PROTEIN 1"/>
    <property type="match status" value="1"/>
</dbReference>
<dbReference type="PANTHER" id="PTHR38522:SF1">
    <property type="entry name" value="SALT STRESS ROOT PROTEIN RS1"/>
    <property type="match status" value="1"/>
</dbReference>
<dbReference type="Pfam" id="PF05558">
    <property type="entry name" value="DREPP"/>
    <property type="match status" value="1"/>
</dbReference>
<evidence type="ECO:0000256" key="1">
    <source>
        <dbReference type="SAM" id="MobiDB-lite"/>
    </source>
</evidence>
<evidence type="ECO:0000305" key="2"/>
<comment type="similarity">
    <text evidence="2">Belongs to the DREPP family.</text>
</comment>
<proteinExistence type="evidence at transcript level"/>
<sequence length="204" mass="21801">MTSVWKTKVLTGLNKLFDKDGKKAAAAEFLKSFNKEEIGKEIDDKKTELEPKVVEVVESSPPEIKALLKDKKTASKIKKNGPAVTKFLEELAKIDFPGAKPVSDAVAKSGTTPLSPAIAFILEKVAPFVPKEEPKPEPEAEAAAETTSREVAVEEEKKEEEAAPAEPAAAAAEAAAPSTEVVEEKKEEEKPAEAAAPAAEPEKQ</sequence>
<reference key="1">
    <citation type="journal article" date="2002" name="Nature">
        <title>The genome sequence and structure of rice chromosome 1.</title>
        <authorList>
            <person name="Sasaki T."/>
            <person name="Matsumoto T."/>
            <person name="Yamamoto K."/>
            <person name="Sakata K."/>
            <person name="Baba T."/>
            <person name="Katayose Y."/>
            <person name="Wu J."/>
            <person name="Niimura Y."/>
            <person name="Cheng Z."/>
            <person name="Nagamura Y."/>
            <person name="Antonio B.A."/>
            <person name="Kanamori H."/>
            <person name="Hosokawa S."/>
            <person name="Masukawa M."/>
            <person name="Arikawa K."/>
            <person name="Chiden Y."/>
            <person name="Hayashi M."/>
            <person name="Okamoto M."/>
            <person name="Ando T."/>
            <person name="Aoki H."/>
            <person name="Arita K."/>
            <person name="Hamada M."/>
            <person name="Harada C."/>
            <person name="Hijishita S."/>
            <person name="Honda M."/>
            <person name="Ichikawa Y."/>
            <person name="Idonuma A."/>
            <person name="Iijima M."/>
            <person name="Ikeda M."/>
            <person name="Ikeno M."/>
            <person name="Ito S."/>
            <person name="Ito T."/>
            <person name="Ito Y."/>
            <person name="Ito Y."/>
            <person name="Iwabuchi A."/>
            <person name="Kamiya K."/>
            <person name="Karasawa W."/>
            <person name="Katagiri S."/>
            <person name="Kikuta A."/>
            <person name="Kobayashi N."/>
            <person name="Kono I."/>
            <person name="Machita K."/>
            <person name="Maehara T."/>
            <person name="Mizuno H."/>
            <person name="Mizubayashi T."/>
            <person name="Mukai Y."/>
            <person name="Nagasaki H."/>
            <person name="Nakashima M."/>
            <person name="Nakama Y."/>
            <person name="Nakamichi Y."/>
            <person name="Nakamura M."/>
            <person name="Namiki N."/>
            <person name="Negishi M."/>
            <person name="Ohta I."/>
            <person name="Ono N."/>
            <person name="Saji S."/>
            <person name="Sakai K."/>
            <person name="Shibata M."/>
            <person name="Shimokawa T."/>
            <person name="Shomura A."/>
            <person name="Song J."/>
            <person name="Takazaki Y."/>
            <person name="Terasawa K."/>
            <person name="Tsuji K."/>
            <person name="Waki K."/>
            <person name="Yamagata H."/>
            <person name="Yamane H."/>
            <person name="Yoshiki S."/>
            <person name="Yoshihara R."/>
            <person name="Yukawa K."/>
            <person name="Zhong H."/>
            <person name="Iwama H."/>
            <person name="Endo T."/>
            <person name="Ito H."/>
            <person name="Hahn J.H."/>
            <person name="Kim H.-I."/>
            <person name="Eun M.-Y."/>
            <person name="Yano M."/>
            <person name="Jiang J."/>
            <person name="Gojobori T."/>
        </authorList>
    </citation>
    <scope>NUCLEOTIDE SEQUENCE [LARGE SCALE GENOMIC DNA]</scope>
    <source>
        <strain>cv. Nipponbare</strain>
    </source>
</reference>
<reference key="2">
    <citation type="journal article" date="2005" name="Nature">
        <title>The map-based sequence of the rice genome.</title>
        <authorList>
            <consortium name="International rice genome sequencing project (IRGSP)"/>
        </authorList>
    </citation>
    <scope>NUCLEOTIDE SEQUENCE [LARGE SCALE GENOMIC DNA]</scope>
    <source>
        <strain>cv. Nipponbare</strain>
    </source>
</reference>
<reference key="3">
    <citation type="journal article" date="2008" name="Nucleic Acids Res.">
        <title>The rice annotation project database (RAP-DB): 2008 update.</title>
        <authorList>
            <consortium name="The rice annotation project (RAP)"/>
        </authorList>
    </citation>
    <scope>GENOME REANNOTATION</scope>
    <source>
        <strain>cv. Nipponbare</strain>
    </source>
</reference>
<reference key="4">
    <citation type="journal article" date="2013" name="Rice">
        <title>Improvement of the Oryza sativa Nipponbare reference genome using next generation sequence and optical map data.</title>
        <authorList>
            <person name="Kawahara Y."/>
            <person name="de la Bastide M."/>
            <person name="Hamilton J.P."/>
            <person name="Kanamori H."/>
            <person name="McCombie W.R."/>
            <person name="Ouyang S."/>
            <person name="Schwartz D.C."/>
            <person name="Tanaka T."/>
            <person name="Wu J."/>
            <person name="Zhou S."/>
            <person name="Childs K.L."/>
            <person name="Davidson R.M."/>
            <person name="Lin H."/>
            <person name="Quesada-Ocampo L."/>
            <person name="Vaillancourt B."/>
            <person name="Sakai H."/>
            <person name="Lee S.S."/>
            <person name="Kim J."/>
            <person name="Numa H."/>
            <person name="Itoh T."/>
            <person name="Buell C.R."/>
            <person name="Matsumoto T."/>
        </authorList>
    </citation>
    <scope>GENOME REANNOTATION</scope>
    <source>
        <strain>cv. Nipponbare</strain>
    </source>
</reference>
<reference key="5">
    <citation type="journal article" date="2005" name="PLoS Biol.">
        <title>The genomes of Oryza sativa: a history of duplications.</title>
        <authorList>
            <person name="Yu J."/>
            <person name="Wang J."/>
            <person name="Lin W."/>
            <person name="Li S."/>
            <person name="Li H."/>
            <person name="Zhou J."/>
            <person name="Ni P."/>
            <person name="Dong W."/>
            <person name="Hu S."/>
            <person name="Zeng C."/>
            <person name="Zhang J."/>
            <person name="Zhang Y."/>
            <person name="Li R."/>
            <person name="Xu Z."/>
            <person name="Li S."/>
            <person name="Li X."/>
            <person name="Zheng H."/>
            <person name="Cong L."/>
            <person name="Lin L."/>
            <person name="Yin J."/>
            <person name="Geng J."/>
            <person name="Li G."/>
            <person name="Shi J."/>
            <person name="Liu J."/>
            <person name="Lv H."/>
            <person name="Li J."/>
            <person name="Wang J."/>
            <person name="Deng Y."/>
            <person name="Ran L."/>
            <person name="Shi X."/>
            <person name="Wang X."/>
            <person name="Wu Q."/>
            <person name="Li C."/>
            <person name="Ren X."/>
            <person name="Wang J."/>
            <person name="Wang X."/>
            <person name="Li D."/>
            <person name="Liu D."/>
            <person name="Zhang X."/>
            <person name="Ji Z."/>
            <person name="Zhao W."/>
            <person name="Sun Y."/>
            <person name="Zhang Z."/>
            <person name="Bao J."/>
            <person name="Han Y."/>
            <person name="Dong L."/>
            <person name="Ji J."/>
            <person name="Chen P."/>
            <person name="Wu S."/>
            <person name="Liu J."/>
            <person name="Xiao Y."/>
            <person name="Bu D."/>
            <person name="Tan J."/>
            <person name="Yang L."/>
            <person name="Ye C."/>
            <person name="Zhang J."/>
            <person name="Xu J."/>
            <person name="Zhou Y."/>
            <person name="Yu Y."/>
            <person name="Zhang B."/>
            <person name="Zhuang S."/>
            <person name="Wei H."/>
            <person name="Liu B."/>
            <person name="Lei M."/>
            <person name="Yu H."/>
            <person name="Li Y."/>
            <person name="Xu H."/>
            <person name="Wei S."/>
            <person name="He X."/>
            <person name="Fang L."/>
            <person name="Zhang Z."/>
            <person name="Zhang Y."/>
            <person name="Huang X."/>
            <person name="Su Z."/>
            <person name="Tong W."/>
            <person name="Li J."/>
            <person name="Tong Z."/>
            <person name="Li S."/>
            <person name="Ye J."/>
            <person name="Wang L."/>
            <person name="Fang L."/>
            <person name="Lei T."/>
            <person name="Chen C.-S."/>
            <person name="Chen H.-C."/>
            <person name="Xu Z."/>
            <person name="Li H."/>
            <person name="Huang H."/>
            <person name="Zhang F."/>
            <person name="Xu H."/>
            <person name="Li N."/>
            <person name="Zhao C."/>
            <person name="Li S."/>
            <person name="Dong L."/>
            <person name="Huang Y."/>
            <person name="Li L."/>
            <person name="Xi Y."/>
            <person name="Qi Q."/>
            <person name="Li W."/>
            <person name="Zhang B."/>
            <person name="Hu W."/>
            <person name="Zhang Y."/>
            <person name="Tian X."/>
            <person name="Jiao Y."/>
            <person name="Liang X."/>
            <person name="Jin J."/>
            <person name="Gao L."/>
            <person name="Zheng W."/>
            <person name="Hao B."/>
            <person name="Liu S.-M."/>
            <person name="Wang W."/>
            <person name="Yuan L."/>
            <person name="Cao M."/>
            <person name="McDermott J."/>
            <person name="Samudrala R."/>
            <person name="Wang J."/>
            <person name="Wong G.K.-S."/>
            <person name="Yang H."/>
        </authorList>
    </citation>
    <scope>NUCLEOTIDE SEQUENCE [LARGE SCALE GENOMIC DNA]</scope>
    <source>
        <strain>cv. Nipponbare</strain>
    </source>
</reference>
<reference key="6">
    <citation type="journal article" date="2003" name="Science">
        <title>Collection, mapping, and annotation of over 28,000 cDNA clones from japonica rice.</title>
        <authorList>
            <consortium name="The rice full-length cDNA consortium"/>
        </authorList>
    </citation>
    <scope>NUCLEOTIDE SEQUENCE [LARGE SCALE MRNA]</scope>
    <source>
        <strain>cv. Nipponbare</strain>
    </source>
</reference>
<accession>Q0JPA6</accession>
<accession>B7EAP0</accession>
<accession>P83649</accession>
<accession>Q9LGY5</accession>
<organism>
    <name type="scientific">Oryza sativa subsp. japonica</name>
    <name type="common">Rice</name>
    <dbReference type="NCBI Taxonomy" id="39947"/>
    <lineage>
        <taxon>Eukaryota</taxon>
        <taxon>Viridiplantae</taxon>
        <taxon>Streptophyta</taxon>
        <taxon>Embryophyta</taxon>
        <taxon>Tracheophyta</taxon>
        <taxon>Spermatophyta</taxon>
        <taxon>Magnoliopsida</taxon>
        <taxon>Liliopsida</taxon>
        <taxon>Poales</taxon>
        <taxon>Poaceae</taxon>
        <taxon>BOP clade</taxon>
        <taxon>Oryzoideae</taxon>
        <taxon>Oryzeae</taxon>
        <taxon>Oryzinae</taxon>
        <taxon>Oryza</taxon>
        <taxon>Oryza sativa</taxon>
    </lineage>
</organism>
<feature type="chain" id="PRO_0000072196" description="Salt stress root protein RS1">
    <location>
        <begin position="1"/>
        <end position="204"/>
    </location>
</feature>
<feature type="region of interest" description="Disordered" evidence="1">
    <location>
        <begin position="128"/>
        <end position="204"/>
    </location>
</feature>
<feature type="compositionally biased region" description="Basic and acidic residues" evidence="1">
    <location>
        <begin position="147"/>
        <end position="161"/>
    </location>
</feature>
<feature type="compositionally biased region" description="Low complexity" evidence="1">
    <location>
        <begin position="164"/>
        <end position="180"/>
    </location>
</feature>
<feature type="compositionally biased region" description="Basic and acidic residues" evidence="1">
    <location>
        <begin position="182"/>
        <end position="192"/>
    </location>
</feature>
<feature type="compositionally biased region" description="Low complexity" evidence="1">
    <location>
        <begin position="193"/>
        <end position="204"/>
    </location>
</feature>
<gene>
    <name type="ordered locus">Os01g0233000</name>
    <name type="ordered locus">LOC_Os01g13210</name>
    <name type="ORF">OsJ_000980</name>
    <name type="ORF">P0702F03.6</name>
</gene>
<keyword id="KW-1185">Reference proteome</keyword>